<dbReference type="EMBL" id="AY543070">
    <property type="protein sequence ID" value="AAS77186.1"/>
    <property type="molecule type" value="Genomic_DNA"/>
</dbReference>
<dbReference type="EMBL" id="AY692264">
    <property type="protein sequence ID" value="AAU05282.1"/>
    <property type="molecule type" value="Genomic_DNA"/>
</dbReference>
<dbReference type="EMBL" id="AY587007">
    <property type="protein sequence ID" value="AAX12073.1"/>
    <property type="molecule type" value="Genomic_DNA"/>
</dbReference>
<dbReference type="RefSeq" id="YP_006975.1">
    <property type="nucleotide sequence ID" value="NC_005859.1"/>
</dbReference>
<dbReference type="GeneID" id="2777636"/>
<dbReference type="KEGG" id="vg:2777636"/>
<dbReference type="Proteomes" id="UP000002107">
    <property type="component" value="Genome"/>
</dbReference>
<dbReference type="Proteomes" id="UP000002141">
    <property type="component" value="Segment"/>
</dbReference>
<dbReference type="Proteomes" id="UP000002503">
    <property type="component" value="Segment"/>
</dbReference>
<dbReference type="GO" id="GO:0098015">
    <property type="term" value="C:virus tail"/>
    <property type="evidence" value="ECO:0000314"/>
    <property type="project" value="UniProtKB"/>
</dbReference>
<dbReference type="GO" id="GO:0098003">
    <property type="term" value="P:viral tail assembly"/>
    <property type="evidence" value="ECO:0000314"/>
    <property type="project" value="UniProtKB"/>
</dbReference>
<comment type="function">
    <text evidence="2">Putative role in tail stability.</text>
</comment>
<comment type="subcellular location">
    <subcellularLocation>
        <location>Virion</location>
    </subcellularLocation>
    <text evidence="1 4">Component of the tail. Located on the side of the baseplate, at the level of the cone formed by the BHP-pb3 trimer.</text>
</comment>
<keyword id="KW-0426">Late protein</keyword>
<keyword id="KW-1185">Reference proteome</keyword>
<keyword id="KW-1188">Viral release from host cell</keyword>
<keyword id="KW-1245">Viral tail assembly</keyword>
<keyword id="KW-1227">Viral tail protein</keyword>
<keyword id="KW-0946">Virion</keyword>
<organism>
    <name type="scientific">Escherichia phage T5</name>
    <name type="common">Enterobacteria phage T5</name>
    <dbReference type="NCBI Taxonomy" id="2695836"/>
    <lineage>
        <taxon>Viruses</taxon>
        <taxon>Duplodnaviria</taxon>
        <taxon>Heunggongvirae</taxon>
        <taxon>Uroviricota</taxon>
        <taxon>Caudoviricetes</taxon>
        <taxon>Demerecviridae</taxon>
        <taxon>Markadamsvirinae</taxon>
        <taxon>Tequintavirus</taxon>
        <taxon>Tequintavirus T5</taxon>
    </lineage>
</organism>
<evidence type="ECO:0000269" key="1">
    <source>
    </source>
</evidence>
<evidence type="ECO:0000269" key="2">
    <source>
    </source>
</evidence>
<evidence type="ECO:0000303" key="3">
    <source>
    </source>
</evidence>
<evidence type="ECO:0000305" key="4">
    <source>
    </source>
</evidence>
<evidence type="ECO:0000312" key="5">
    <source>
        <dbReference type="EMBL" id="AAS77186.1"/>
    </source>
</evidence>
<evidence type="ECO:0000312" key="6">
    <source>
        <dbReference type="EMBL" id="AAU05282.1"/>
    </source>
</evidence>
<evidence type="ECO:0000312" key="7">
    <source>
        <dbReference type="EMBL" id="AAX12073.1"/>
    </source>
</evidence>
<organismHost>
    <name type="scientific">Escherichia coli</name>
    <dbReference type="NCBI Taxonomy" id="562"/>
</organismHost>
<accession>Q6QGE0</accession>
<sequence length="255" mass="27857">MSLSDLARQIIKEQLDTASRSENNKNTVVYSVETGLKDPTRDGTVAQVSFKFSKPVSQDLLNIRTASILKAVSSSLDLSGDLGALENLIQATAGKKSSVGKKRSTGRVQVNFGDPSDVEDGYSGAVTGASGRFVSNSNMKIILEIVAKEYLIKDMKKAGAPLKFRTGRFANSLKIKDVMLRDSETSKGSPELNVTYNYMTRPYSVFNPAVSTYRRLSLRPYPGARNPQKLIGEAIAKAARDLIHSRYKIKVNQGT</sequence>
<proteinExistence type="evidence at transcript level"/>
<name>COMPL_BPT5</name>
<gene>
    <name type="ORF">ORF136</name>
    <name evidence="5" type="ORF">T5.147</name>
    <name evidence="6" type="ORF">T5p143</name>
</gene>
<reference key="1">
    <citation type="submission" date="2004-01" db="EMBL/GenBank/DDBJ databases">
        <title>Bacteriophage T5 complete genome.</title>
        <authorList>
            <person name="Ksenzenko V.N."/>
            <person name="Kaliman A.V."/>
            <person name="Krutilina A.I."/>
            <person name="Shlyapnikov M.G."/>
        </authorList>
    </citation>
    <scope>NUCLEOTIDE SEQUENCE [GENOMIC DNA]</scope>
</reference>
<reference key="2">
    <citation type="journal article" date="2005" name="Virology">
        <title>Complete genome sequence of bacteriophage T5.</title>
        <authorList>
            <person name="Wang J."/>
            <person name="Jiang Y."/>
            <person name="Vincent M."/>
            <person name="Sun Y."/>
            <person name="Yu H."/>
            <person name="Wang J."/>
            <person name="Bao Q."/>
            <person name="Kong H."/>
            <person name="Hu S."/>
        </authorList>
    </citation>
    <scope>NUCLEOTIDE SEQUENCE [LARGE SCALE GENOMIC DNA]</scope>
    <scope>INDUCTION</scope>
    <source>
        <strain evidence="7">ATCC 11303-B5</strain>
    </source>
</reference>
<reference key="3">
    <citation type="journal article" date="2014" name="J. Virol.">
        <title>Insights into bacteriophage T5 structure from analysis of its morphogenesis genes and protein components.</title>
        <authorList>
            <person name="Zivanovic Y."/>
            <person name="Confalonieri F."/>
            <person name="Ponchon L."/>
            <person name="Lurz R."/>
            <person name="Chami M."/>
            <person name="Flayhan A."/>
            <person name="Renouard M."/>
            <person name="Huet A."/>
            <person name="Decottignies P."/>
            <person name="Davidson A.R."/>
            <person name="Breyton C."/>
            <person name="Boulanger P."/>
        </authorList>
    </citation>
    <scope>NUCLEOTIDE SEQUENCE [LARGE SCALE GENOMIC DNA]</scope>
    <scope>SUBCELLULAR LOCATION</scope>
    <source>
        <strain>St0 deletion mutant</strain>
    </source>
</reference>
<reference key="4">
    <citation type="journal article" date="2023" name="Sci. Adv.">
        <title>Structural basis of bacteriophage T5 infection trigger and E. coli cell wall perforation.</title>
        <authorList>
            <person name="Linares R."/>
            <person name="Arnaud C.A."/>
            <person name="Effantin G."/>
            <person name="Darnault C."/>
            <person name="Epalle N.H."/>
            <person name="Boeri Erba E."/>
            <person name="Schoehn G."/>
            <person name="Breyton C."/>
        </authorList>
    </citation>
    <scope>SUBCELLULAR LOCATION</scope>
    <scope>FUNCTION</scope>
</reference>
<feature type="chain" id="PRO_0000432945" description="Tail completion protein p143">
    <location>
        <begin position="1"/>
        <end position="255"/>
    </location>
</feature>
<protein>
    <recommendedName>
        <fullName evidence="3">Tail completion protein p143</fullName>
    </recommendedName>
    <alternativeName>
        <fullName evidence="3">Tail protein p143</fullName>
    </alternativeName>
</protein>